<protein>
    <recommendedName>
        <fullName evidence="1">Acetate kinase</fullName>
        <ecNumber evidence="1">2.7.2.1</ecNumber>
    </recommendedName>
    <alternativeName>
        <fullName evidence="1">Acetokinase</fullName>
    </alternativeName>
</protein>
<evidence type="ECO:0000255" key="1">
    <source>
        <dbReference type="HAMAP-Rule" id="MF_00020"/>
    </source>
</evidence>
<keyword id="KW-0067">ATP-binding</keyword>
<keyword id="KW-0963">Cytoplasm</keyword>
<keyword id="KW-0418">Kinase</keyword>
<keyword id="KW-0460">Magnesium</keyword>
<keyword id="KW-0479">Metal-binding</keyword>
<keyword id="KW-0547">Nucleotide-binding</keyword>
<keyword id="KW-0808">Transferase</keyword>
<dbReference type="EC" id="2.7.2.1" evidence="1"/>
<dbReference type="EMBL" id="CP000703">
    <property type="protein sequence ID" value="ABQ49557.1"/>
    <property type="molecule type" value="Genomic_DNA"/>
</dbReference>
<dbReference type="RefSeq" id="WP_000040064.1">
    <property type="nucleotide sequence ID" value="NC_009487.1"/>
</dbReference>
<dbReference type="SMR" id="A5ITN4"/>
<dbReference type="KEGG" id="saj:SaurJH9_1767"/>
<dbReference type="HOGENOM" id="CLU_020352_0_1_9"/>
<dbReference type="UniPathway" id="UPA00340">
    <property type="reaction ID" value="UER00458"/>
</dbReference>
<dbReference type="GO" id="GO:0005737">
    <property type="term" value="C:cytoplasm"/>
    <property type="evidence" value="ECO:0007669"/>
    <property type="project" value="UniProtKB-SubCell"/>
</dbReference>
<dbReference type="GO" id="GO:0008776">
    <property type="term" value="F:acetate kinase activity"/>
    <property type="evidence" value="ECO:0007669"/>
    <property type="project" value="UniProtKB-UniRule"/>
</dbReference>
<dbReference type="GO" id="GO:0005524">
    <property type="term" value="F:ATP binding"/>
    <property type="evidence" value="ECO:0007669"/>
    <property type="project" value="UniProtKB-KW"/>
</dbReference>
<dbReference type="GO" id="GO:0000287">
    <property type="term" value="F:magnesium ion binding"/>
    <property type="evidence" value="ECO:0007669"/>
    <property type="project" value="UniProtKB-UniRule"/>
</dbReference>
<dbReference type="GO" id="GO:0006083">
    <property type="term" value="P:acetate metabolic process"/>
    <property type="evidence" value="ECO:0007669"/>
    <property type="project" value="TreeGrafter"/>
</dbReference>
<dbReference type="GO" id="GO:0006085">
    <property type="term" value="P:acetyl-CoA biosynthetic process"/>
    <property type="evidence" value="ECO:0007669"/>
    <property type="project" value="UniProtKB-UniRule"/>
</dbReference>
<dbReference type="CDD" id="cd24010">
    <property type="entry name" value="ASKHA_NBD_AcK_PK"/>
    <property type="match status" value="1"/>
</dbReference>
<dbReference type="Gene3D" id="3.30.420.40">
    <property type="match status" value="2"/>
</dbReference>
<dbReference type="HAMAP" id="MF_00020">
    <property type="entry name" value="Acetate_kinase"/>
    <property type="match status" value="1"/>
</dbReference>
<dbReference type="InterPro" id="IPR004372">
    <property type="entry name" value="Ac/propionate_kinase"/>
</dbReference>
<dbReference type="InterPro" id="IPR000890">
    <property type="entry name" value="Aliphatic_acid_kin_short-chain"/>
</dbReference>
<dbReference type="InterPro" id="IPR023865">
    <property type="entry name" value="Aliphatic_acid_kinase_CS"/>
</dbReference>
<dbReference type="InterPro" id="IPR043129">
    <property type="entry name" value="ATPase_NBD"/>
</dbReference>
<dbReference type="NCBIfam" id="TIGR00016">
    <property type="entry name" value="ackA"/>
    <property type="match status" value="1"/>
</dbReference>
<dbReference type="PANTHER" id="PTHR21060">
    <property type="entry name" value="ACETATE KINASE"/>
    <property type="match status" value="1"/>
</dbReference>
<dbReference type="PANTHER" id="PTHR21060:SF15">
    <property type="entry name" value="ACETATE KINASE-RELATED"/>
    <property type="match status" value="1"/>
</dbReference>
<dbReference type="Pfam" id="PF00871">
    <property type="entry name" value="Acetate_kinase"/>
    <property type="match status" value="1"/>
</dbReference>
<dbReference type="PIRSF" id="PIRSF000722">
    <property type="entry name" value="Acetate_prop_kin"/>
    <property type="match status" value="1"/>
</dbReference>
<dbReference type="PRINTS" id="PR00471">
    <property type="entry name" value="ACETATEKNASE"/>
</dbReference>
<dbReference type="SUPFAM" id="SSF53067">
    <property type="entry name" value="Actin-like ATPase domain"/>
    <property type="match status" value="2"/>
</dbReference>
<dbReference type="PROSITE" id="PS01075">
    <property type="entry name" value="ACETATE_KINASE_1"/>
    <property type="match status" value="1"/>
</dbReference>
<dbReference type="PROSITE" id="PS01076">
    <property type="entry name" value="ACETATE_KINASE_2"/>
    <property type="match status" value="1"/>
</dbReference>
<gene>
    <name evidence="1" type="primary">ackA</name>
    <name type="ordered locus">SaurJH9_1767</name>
</gene>
<organism>
    <name type="scientific">Staphylococcus aureus (strain JH9)</name>
    <dbReference type="NCBI Taxonomy" id="359786"/>
    <lineage>
        <taxon>Bacteria</taxon>
        <taxon>Bacillati</taxon>
        <taxon>Bacillota</taxon>
        <taxon>Bacilli</taxon>
        <taxon>Bacillales</taxon>
        <taxon>Staphylococcaceae</taxon>
        <taxon>Staphylococcus</taxon>
    </lineage>
</organism>
<feature type="chain" id="PRO_1000074193" description="Acetate kinase">
    <location>
        <begin position="1"/>
        <end position="400"/>
    </location>
</feature>
<feature type="active site" description="Proton donor/acceptor" evidence="1">
    <location>
        <position position="147"/>
    </location>
</feature>
<feature type="binding site" evidence="1">
    <location>
        <position position="9"/>
    </location>
    <ligand>
        <name>Mg(2+)</name>
        <dbReference type="ChEBI" id="CHEBI:18420"/>
    </ligand>
</feature>
<feature type="binding site" evidence="1">
    <location>
        <position position="16"/>
    </location>
    <ligand>
        <name>ATP</name>
        <dbReference type="ChEBI" id="CHEBI:30616"/>
    </ligand>
</feature>
<feature type="binding site" evidence="1">
    <location>
        <position position="90"/>
    </location>
    <ligand>
        <name>substrate</name>
    </ligand>
</feature>
<feature type="binding site" evidence="1">
    <location>
        <begin position="207"/>
        <end position="211"/>
    </location>
    <ligand>
        <name>ATP</name>
        <dbReference type="ChEBI" id="CHEBI:30616"/>
    </ligand>
</feature>
<feature type="binding site" evidence="1">
    <location>
        <begin position="282"/>
        <end position="284"/>
    </location>
    <ligand>
        <name>ATP</name>
        <dbReference type="ChEBI" id="CHEBI:30616"/>
    </ligand>
</feature>
<feature type="binding site" evidence="1">
    <location>
        <begin position="330"/>
        <end position="334"/>
    </location>
    <ligand>
        <name>ATP</name>
        <dbReference type="ChEBI" id="CHEBI:30616"/>
    </ligand>
</feature>
<feature type="binding site" evidence="1">
    <location>
        <position position="385"/>
    </location>
    <ligand>
        <name>Mg(2+)</name>
        <dbReference type="ChEBI" id="CHEBI:18420"/>
    </ligand>
</feature>
<feature type="site" description="Transition state stabilizer" evidence="1">
    <location>
        <position position="179"/>
    </location>
</feature>
<feature type="site" description="Transition state stabilizer" evidence="1">
    <location>
        <position position="240"/>
    </location>
</feature>
<name>ACKA_STAA9</name>
<sequence length="400" mass="44043">MSKLILAINAGSSSLKFQLIRMPEEELVTKGLIERIGLKDSIFTIEVNGEKVKTVQDIKDHVEAVDIMLDAFKAHNIINDINDIDGTGHRVVHGGEKFPESVAITDEVEKEIEELSELAPLHNPANLMGIRAFRKLLPNIPHVAIFDTAFHQTMPEKAYLYSLPYHYYKDYGIRKYGFHGTSHKFVSQRAAEMLDKPVEDLRIISCHIGNGASIAAIDGGKSIDTSMGFTPLAGVTMGTRSGNIDPALIPFIMEKTGKTAEQVLEILNKESGLLGLSGTSSDLRDLSEEAESGKARSQMALDVFASKIHKYIGSYAARMHGVDVIVFTAGIGENSVEIRAKVLEGLEFMGVYWDPKKNENLLRGKEGFINYPHSPVKVVVIPTDEESMIARDVMTFGGLK</sequence>
<comment type="function">
    <text evidence="1">Catalyzes the formation of acetyl phosphate from acetate and ATP. Can also catalyze the reverse reaction.</text>
</comment>
<comment type="catalytic activity">
    <reaction evidence="1">
        <text>acetate + ATP = acetyl phosphate + ADP</text>
        <dbReference type="Rhea" id="RHEA:11352"/>
        <dbReference type="ChEBI" id="CHEBI:22191"/>
        <dbReference type="ChEBI" id="CHEBI:30089"/>
        <dbReference type="ChEBI" id="CHEBI:30616"/>
        <dbReference type="ChEBI" id="CHEBI:456216"/>
        <dbReference type="EC" id="2.7.2.1"/>
    </reaction>
</comment>
<comment type="cofactor">
    <cofactor evidence="1">
        <name>Mg(2+)</name>
        <dbReference type="ChEBI" id="CHEBI:18420"/>
    </cofactor>
    <cofactor evidence="1">
        <name>Mn(2+)</name>
        <dbReference type="ChEBI" id="CHEBI:29035"/>
    </cofactor>
    <text evidence="1">Mg(2+). Can also accept Mn(2+).</text>
</comment>
<comment type="pathway">
    <text evidence="1">Metabolic intermediate biosynthesis; acetyl-CoA biosynthesis; acetyl-CoA from acetate: step 1/2.</text>
</comment>
<comment type="subunit">
    <text evidence="1">Homodimer.</text>
</comment>
<comment type="subcellular location">
    <subcellularLocation>
        <location evidence="1">Cytoplasm</location>
    </subcellularLocation>
</comment>
<comment type="similarity">
    <text evidence="1">Belongs to the acetokinase family.</text>
</comment>
<accession>A5ITN4</accession>
<reference key="1">
    <citation type="submission" date="2007-05" db="EMBL/GenBank/DDBJ databases">
        <title>Complete sequence of chromosome of Staphylococcus aureus subsp. aureus JH9.</title>
        <authorList>
            <consortium name="US DOE Joint Genome Institute"/>
            <person name="Copeland A."/>
            <person name="Lucas S."/>
            <person name="Lapidus A."/>
            <person name="Barry K."/>
            <person name="Detter J.C."/>
            <person name="Glavina del Rio T."/>
            <person name="Hammon N."/>
            <person name="Israni S."/>
            <person name="Pitluck S."/>
            <person name="Chain P."/>
            <person name="Malfatti S."/>
            <person name="Shin M."/>
            <person name="Vergez L."/>
            <person name="Schmutz J."/>
            <person name="Larimer F."/>
            <person name="Land M."/>
            <person name="Hauser L."/>
            <person name="Kyrpides N."/>
            <person name="Kim E."/>
            <person name="Tomasz A."/>
            <person name="Richardson P."/>
        </authorList>
    </citation>
    <scope>NUCLEOTIDE SEQUENCE [LARGE SCALE GENOMIC DNA]</scope>
    <source>
        <strain>JH9</strain>
    </source>
</reference>
<proteinExistence type="inferred from homology"/>